<sequence length="490" mass="55624">MSLWSSVKFAQRYAQLPKVFYRLVTPQPLDNSRWVIWNGELAQGFALPKHADDPQLLSVFSGAEPFSAFKPLAMKYAGHQFGVYNPDLGDGRGLLLGEMQNQQGQWFDIHLKGAGLTPFSRMGDGRAVLRSTIREYLCSEAMAALGIETTRALGMTVSDTPVYREQVEQGACLIRLAQTHIRFGHFEHFFYTEQYDELRLLADNVIEWYMPECTAHDKPYLAMFEQVVARTATMIAQWQAVGFAHGVMNTDNMSILGQTFDYGPFGFLDDYEPGYICNHSDYQGRYAFDQQPRVALWNLSALAHALSPLVERDDLELALAQYEPTLGKVFSQLMRQKLGLLSQQEGDSELFNAMFTLLAENHTDYTRFFRTLSQLDSEGAQTVIDLFIDRDAARGWLSRYLERVALEQTASGEAKSAQQRCEQMRAVNPKYILRNYLAQQAIDKAQQGDFSEVHTLAKLLKNPYDEQAEMEAYAHLPPEWGKKMVISCSS</sequence>
<proteinExistence type="inferred from homology"/>
<reference key="1">
    <citation type="journal article" date="2003" name="Genome Res.">
        <title>Comparative genome analysis of Vibrio vulnificus, a marine pathogen.</title>
        <authorList>
            <person name="Chen C.-Y."/>
            <person name="Wu K.-M."/>
            <person name="Chang Y.-C."/>
            <person name="Chang C.-H."/>
            <person name="Tsai H.-C."/>
            <person name="Liao T.-L."/>
            <person name="Liu Y.-M."/>
            <person name="Chen H.-J."/>
            <person name="Shen A.B.-T."/>
            <person name="Li J.-C."/>
            <person name="Su T.-L."/>
            <person name="Shao C.-P."/>
            <person name="Lee C.-T."/>
            <person name="Hor L.-I."/>
            <person name="Tsai S.-F."/>
        </authorList>
    </citation>
    <scope>NUCLEOTIDE SEQUENCE [LARGE SCALE GENOMIC DNA]</scope>
    <source>
        <strain>YJ016</strain>
    </source>
</reference>
<gene>
    <name evidence="1" type="primary">ydiU</name>
    <name evidence="1" type="synonym">selO</name>
    <name type="ordered locus">VV1089</name>
</gene>
<keyword id="KW-0067">ATP-binding</keyword>
<keyword id="KW-0460">Magnesium</keyword>
<keyword id="KW-0464">Manganese</keyword>
<keyword id="KW-0479">Metal-binding</keyword>
<keyword id="KW-0547">Nucleotide-binding</keyword>
<keyword id="KW-0548">Nucleotidyltransferase</keyword>
<keyword id="KW-0808">Transferase</keyword>
<comment type="function">
    <text evidence="1">Nucleotidyltransferase involved in the post-translational modification of proteins. It can catalyze the addition of adenosine monophosphate (AMP) or uridine monophosphate (UMP) to a protein, resulting in modifications known as AMPylation and UMPylation.</text>
</comment>
<comment type="catalytic activity">
    <reaction evidence="1">
        <text>L-seryl-[protein] + ATP = 3-O-(5'-adenylyl)-L-seryl-[protein] + diphosphate</text>
        <dbReference type="Rhea" id="RHEA:58120"/>
        <dbReference type="Rhea" id="RHEA-COMP:9863"/>
        <dbReference type="Rhea" id="RHEA-COMP:15073"/>
        <dbReference type="ChEBI" id="CHEBI:29999"/>
        <dbReference type="ChEBI" id="CHEBI:30616"/>
        <dbReference type="ChEBI" id="CHEBI:33019"/>
        <dbReference type="ChEBI" id="CHEBI:142516"/>
        <dbReference type="EC" id="2.7.7.108"/>
    </reaction>
</comment>
<comment type="catalytic activity">
    <reaction evidence="1">
        <text>L-threonyl-[protein] + ATP = 3-O-(5'-adenylyl)-L-threonyl-[protein] + diphosphate</text>
        <dbReference type="Rhea" id="RHEA:54292"/>
        <dbReference type="Rhea" id="RHEA-COMP:11060"/>
        <dbReference type="Rhea" id="RHEA-COMP:13847"/>
        <dbReference type="ChEBI" id="CHEBI:30013"/>
        <dbReference type="ChEBI" id="CHEBI:30616"/>
        <dbReference type="ChEBI" id="CHEBI:33019"/>
        <dbReference type="ChEBI" id="CHEBI:138113"/>
        <dbReference type="EC" id="2.7.7.108"/>
    </reaction>
</comment>
<comment type="catalytic activity">
    <reaction evidence="1">
        <text>L-tyrosyl-[protein] + ATP = O-(5'-adenylyl)-L-tyrosyl-[protein] + diphosphate</text>
        <dbReference type="Rhea" id="RHEA:54288"/>
        <dbReference type="Rhea" id="RHEA-COMP:10136"/>
        <dbReference type="Rhea" id="RHEA-COMP:13846"/>
        <dbReference type="ChEBI" id="CHEBI:30616"/>
        <dbReference type="ChEBI" id="CHEBI:33019"/>
        <dbReference type="ChEBI" id="CHEBI:46858"/>
        <dbReference type="ChEBI" id="CHEBI:83624"/>
        <dbReference type="EC" id="2.7.7.108"/>
    </reaction>
</comment>
<comment type="catalytic activity">
    <reaction evidence="1">
        <text>L-histidyl-[protein] + UTP = N(tele)-(5'-uridylyl)-L-histidyl-[protein] + diphosphate</text>
        <dbReference type="Rhea" id="RHEA:83891"/>
        <dbReference type="Rhea" id="RHEA-COMP:9745"/>
        <dbReference type="Rhea" id="RHEA-COMP:20239"/>
        <dbReference type="ChEBI" id="CHEBI:29979"/>
        <dbReference type="ChEBI" id="CHEBI:33019"/>
        <dbReference type="ChEBI" id="CHEBI:46398"/>
        <dbReference type="ChEBI" id="CHEBI:233474"/>
    </reaction>
</comment>
<comment type="catalytic activity">
    <reaction evidence="1">
        <text>L-seryl-[protein] + UTP = O-(5'-uridylyl)-L-seryl-[protein] + diphosphate</text>
        <dbReference type="Rhea" id="RHEA:64604"/>
        <dbReference type="Rhea" id="RHEA-COMP:9863"/>
        <dbReference type="Rhea" id="RHEA-COMP:16635"/>
        <dbReference type="ChEBI" id="CHEBI:29999"/>
        <dbReference type="ChEBI" id="CHEBI:33019"/>
        <dbReference type="ChEBI" id="CHEBI:46398"/>
        <dbReference type="ChEBI" id="CHEBI:156051"/>
    </reaction>
</comment>
<comment type="catalytic activity">
    <reaction evidence="1">
        <text>L-tyrosyl-[protein] + UTP = O-(5'-uridylyl)-L-tyrosyl-[protein] + diphosphate</text>
        <dbReference type="Rhea" id="RHEA:83887"/>
        <dbReference type="Rhea" id="RHEA-COMP:10136"/>
        <dbReference type="Rhea" id="RHEA-COMP:20238"/>
        <dbReference type="ChEBI" id="CHEBI:33019"/>
        <dbReference type="ChEBI" id="CHEBI:46398"/>
        <dbReference type="ChEBI" id="CHEBI:46858"/>
        <dbReference type="ChEBI" id="CHEBI:90602"/>
    </reaction>
</comment>
<comment type="cofactor">
    <cofactor evidence="1">
        <name>Mg(2+)</name>
        <dbReference type="ChEBI" id="CHEBI:18420"/>
    </cofactor>
    <cofactor evidence="1">
        <name>Mn(2+)</name>
        <dbReference type="ChEBI" id="CHEBI:29035"/>
    </cofactor>
</comment>
<comment type="similarity">
    <text evidence="1">Belongs to the SELO family.</text>
</comment>
<dbReference type="EC" id="2.7.7.-" evidence="1"/>
<dbReference type="EC" id="2.7.7.108" evidence="1"/>
<dbReference type="EMBL" id="BA000037">
    <property type="protein sequence ID" value="BAC93853.1"/>
    <property type="molecule type" value="Genomic_DNA"/>
</dbReference>
<dbReference type="RefSeq" id="WP_011149834.1">
    <property type="nucleotide sequence ID" value="NC_005139.1"/>
</dbReference>
<dbReference type="SMR" id="Q7MMI2"/>
<dbReference type="STRING" id="672.VV93_v1c10100"/>
<dbReference type="KEGG" id="vvy:VV1089"/>
<dbReference type="PATRIC" id="fig|196600.6.peg.1085"/>
<dbReference type="eggNOG" id="COG0397">
    <property type="taxonomic scope" value="Bacteria"/>
</dbReference>
<dbReference type="HOGENOM" id="CLU_010245_4_0_6"/>
<dbReference type="Proteomes" id="UP000002675">
    <property type="component" value="Chromosome I"/>
</dbReference>
<dbReference type="GO" id="GO:0070733">
    <property type="term" value="F:AMPylase activity"/>
    <property type="evidence" value="ECO:0007669"/>
    <property type="project" value="RHEA"/>
</dbReference>
<dbReference type="GO" id="GO:0005524">
    <property type="term" value="F:ATP binding"/>
    <property type="evidence" value="ECO:0007669"/>
    <property type="project" value="UniProtKB-UniRule"/>
</dbReference>
<dbReference type="GO" id="GO:0000287">
    <property type="term" value="F:magnesium ion binding"/>
    <property type="evidence" value="ECO:0007669"/>
    <property type="project" value="UniProtKB-UniRule"/>
</dbReference>
<dbReference type="HAMAP" id="MF_00692">
    <property type="entry name" value="YdiU_SelO"/>
    <property type="match status" value="1"/>
</dbReference>
<dbReference type="InterPro" id="IPR003846">
    <property type="entry name" value="SelO"/>
</dbReference>
<dbReference type="NCBIfam" id="NF000658">
    <property type="entry name" value="PRK00029.1"/>
    <property type="match status" value="1"/>
</dbReference>
<dbReference type="PANTHER" id="PTHR32057">
    <property type="entry name" value="PROTEIN ADENYLYLTRANSFERASE SELO, MITOCHONDRIAL"/>
    <property type="match status" value="1"/>
</dbReference>
<dbReference type="PANTHER" id="PTHR32057:SF14">
    <property type="entry name" value="PROTEIN ADENYLYLTRANSFERASE SELO, MITOCHONDRIAL"/>
    <property type="match status" value="1"/>
</dbReference>
<dbReference type="Pfam" id="PF02696">
    <property type="entry name" value="SelO"/>
    <property type="match status" value="1"/>
</dbReference>
<name>SELO_VIBVY</name>
<protein>
    <recommendedName>
        <fullName evidence="1">Protein nucleotidyltransferase YdiU</fullName>
        <ecNumber evidence="1">2.7.7.-</ecNumber>
    </recommendedName>
    <alternativeName>
        <fullName evidence="1">Protein adenylyltransferase YdiU</fullName>
        <ecNumber evidence="1">2.7.7.108</ecNumber>
    </alternativeName>
    <alternativeName>
        <fullName evidence="1">Protein uridylyltransferase YdiU</fullName>
        <ecNumber evidence="1">2.7.7.-</ecNumber>
    </alternativeName>
</protein>
<accession>Q7MMI2</accession>
<feature type="chain" id="PRO_0000121437" description="Protein nucleotidyltransferase YdiU">
    <location>
        <begin position="1"/>
        <end position="490"/>
    </location>
</feature>
<feature type="active site" description="Proton acceptor" evidence="1">
    <location>
        <position position="251"/>
    </location>
</feature>
<feature type="binding site" evidence="1">
    <location>
        <position position="89"/>
    </location>
    <ligand>
        <name>ATP</name>
        <dbReference type="ChEBI" id="CHEBI:30616"/>
    </ligand>
</feature>
<feature type="binding site" evidence="1">
    <location>
        <position position="91"/>
    </location>
    <ligand>
        <name>ATP</name>
        <dbReference type="ChEBI" id="CHEBI:30616"/>
    </ligand>
</feature>
<feature type="binding site" evidence="1">
    <location>
        <position position="92"/>
    </location>
    <ligand>
        <name>ATP</name>
        <dbReference type="ChEBI" id="CHEBI:30616"/>
    </ligand>
</feature>
<feature type="binding site" evidence="1">
    <location>
        <position position="112"/>
    </location>
    <ligand>
        <name>ATP</name>
        <dbReference type="ChEBI" id="CHEBI:30616"/>
    </ligand>
</feature>
<feature type="binding site" evidence="1">
    <location>
        <position position="124"/>
    </location>
    <ligand>
        <name>ATP</name>
        <dbReference type="ChEBI" id="CHEBI:30616"/>
    </ligand>
</feature>
<feature type="binding site" evidence="1">
    <location>
        <position position="125"/>
    </location>
    <ligand>
        <name>ATP</name>
        <dbReference type="ChEBI" id="CHEBI:30616"/>
    </ligand>
</feature>
<feature type="binding site" evidence="1">
    <location>
        <position position="175"/>
    </location>
    <ligand>
        <name>ATP</name>
        <dbReference type="ChEBI" id="CHEBI:30616"/>
    </ligand>
</feature>
<feature type="binding site" evidence="1">
    <location>
        <position position="182"/>
    </location>
    <ligand>
        <name>ATP</name>
        <dbReference type="ChEBI" id="CHEBI:30616"/>
    </ligand>
</feature>
<feature type="binding site" evidence="1">
    <location>
        <position position="252"/>
    </location>
    <ligand>
        <name>Mg(2+)</name>
        <dbReference type="ChEBI" id="CHEBI:18420"/>
    </ligand>
</feature>
<feature type="binding site" evidence="1">
    <location>
        <position position="261"/>
    </location>
    <ligand>
        <name>ATP</name>
        <dbReference type="ChEBI" id="CHEBI:30616"/>
    </ligand>
</feature>
<feature type="binding site" evidence="1">
    <location>
        <position position="261"/>
    </location>
    <ligand>
        <name>Mg(2+)</name>
        <dbReference type="ChEBI" id="CHEBI:18420"/>
    </ligand>
</feature>
<evidence type="ECO:0000255" key="1">
    <source>
        <dbReference type="HAMAP-Rule" id="MF_00692"/>
    </source>
</evidence>
<organism>
    <name type="scientific">Vibrio vulnificus (strain YJ016)</name>
    <dbReference type="NCBI Taxonomy" id="196600"/>
    <lineage>
        <taxon>Bacteria</taxon>
        <taxon>Pseudomonadati</taxon>
        <taxon>Pseudomonadota</taxon>
        <taxon>Gammaproteobacteria</taxon>
        <taxon>Vibrionales</taxon>
        <taxon>Vibrionaceae</taxon>
        <taxon>Vibrio</taxon>
    </lineage>
</organism>